<sequence length="347" mass="38349">MEEQLIPIQWKDDALVLLDQTLLPNEIVYESFKTAESVWDAIQVMKVRGAPAIGVSAAYGVYLGIKEFAESTEEGFMDEVRKVCTYLATSRPTAVNLFWALERMESVATDNIHLSISQLKNRLLEEAKEIHREDEEINRQIGEHALTLFHDGMGVLTHCNAGALATTKYGTATAPMYLAKEKGWDLKIYSDETRPRLQGSTLTALELQRAGIDVTVITDNMAAMVMSQGKIDAVIVGCDRVAANGDVANKIGTLGVSILAKYYNIPFYVAAPTPTIDLKTSTGKEIPIEERDASEVINRFGKYSAPKESKVYNPAFDVTPHENVTAIITEKGIVKAPFTENLKKLFQ</sequence>
<keyword id="KW-0119">Carbohydrate metabolism</keyword>
<keyword id="KW-0413">Isomerase</keyword>
<keyword id="KW-1185">Reference proteome</keyword>
<reference key="1">
    <citation type="journal article" date="2003" name="Nature">
        <title>Genome sequence of Bacillus cereus and comparative analysis with Bacillus anthracis.</title>
        <authorList>
            <person name="Ivanova N."/>
            <person name="Sorokin A."/>
            <person name="Anderson I."/>
            <person name="Galleron N."/>
            <person name="Candelon B."/>
            <person name="Kapatral V."/>
            <person name="Bhattacharyya A."/>
            <person name="Reznik G."/>
            <person name="Mikhailova N."/>
            <person name="Lapidus A."/>
            <person name="Chu L."/>
            <person name="Mazur M."/>
            <person name="Goltsman E."/>
            <person name="Larsen N."/>
            <person name="D'Souza M."/>
            <person name="Walunas T."/>
            <person name="Grechkin Y."/>
            <person name="Pusch G."/>
            <person name="Haselkorn R."/>
            <person name="Fonstein M."/>
            <person name="Ehrlich S.D."/>
            <person name="Overbeek R."/>
            <person name="Kyrpides N.C."/>
        </authorList>
    </citation>
    <scope>NUCLEOTIDE SEQUENCE [LARGE SCALE GENOMIC DNA]</scope>
    <source>
        <strain>ATCC 14579 / DSM 31 / CCUG 7414 / JCM 2152 / NBRC 15305 / NCIMB 9373 / NCTC 2599 / NRRL B-3711</strain>
    </source>
</reference>
<protein>
    <recommendedName>
        <fullName evidence="1">5-deoxyribose 1-phosphate isomerase</fullName>
        <ecNumber evidence="1">5.3.1.-</ecNumber>
    </recommendedName>
</protein>
<name>DRDI_BACCR</name>
<proteinExistence type="inferred from homology"/>
<evidence type="ECO:0000255" key="1">
    <source>
        <dbReference type="HAMAP-Rule" id="MF_02229"/>
    </source>
</evidence>
<evidence type="ECO:0000305" key="2"/>
<organism>
    <name type="scientific">Bacillus cereus (strain ATCC 14579 / DSM 31 / CCUG 7414 / JCM 2152 / NBRC 15305 / NCIMB 9373 / NCTC 2599 / NRRL B-3711)</name>
    <dbReference type="NCBI Taxonomy" id="226900"/>
    <lineage>
        <taxon>Bacteria</taxon>
        <taxon>Bacillati</taxon>
        <taxon>Bacillota</taxon>
        <taxon>Bacilli</taxon>
        <taxon>Bacillales</taxon>
        <taxon>Bacillaceae</taxon>
        <taxon>Bacillus</taxon>
        <taxon>Bacillus cereus group</taxon>
    </lineage>
</organism>
<dbReference type="EC" id="5.3.1.-" evidence="1"/>
<dbReference type="EMBL" id="AE016877">
    <property type="protein sequence ID" value="AAP07419.1"/>
    <property type="status" value="ALT_INIT"/>
    <property type="molecule type" value="Genomic_DNA"/>
</dbReference>
<dbReference type="RefSeq" id="NP_830218.1">
    <property type="nucleotide sequence ID" value="NC_004722.1"/>
</dbReference>
<dbReference type="SMR" id="Q81IK7"/>
<dbReference type="STRING" id="226900.BC_0379"/>
<dbReference type="KEGG" id="bce:BC0379"/>
<dbReference type="PATRIC" id="fig|226900.8.peg.351"/>
<dbReference type="HOGENOM" id="CLU_016218_1_2_9"/>
<dbReference type="Proteomes" id="UP000001417">
    <property type="component" value="Chromosome"/>
</dbReference>
<dbReference type="GO" id="GO:0046523">
    <property type="term" value="F:S-methyl-5-thioribose-1-phosphate isomerase activity"/>
    <property type="evidence" value="ECO:0000318"/>
    <property type="project" value="GO_Central"/>
</dbReference>
<dbReference type="GO" id="GO:0019509">
    <property type="term" value="P:L-methionine salvage from methylthioadenosine"/>
    <property type="evidence" value="ECO:0000318"/>
    <property type="project" value="GO_Central"/>
</dbReference>
<dbReference type="GO" id="GO:0019323">
    <property type="term" value="P:pentose catabolic process"/>
    <property type="evidence" value="ECO:0007669"/>
    <property type="project" value="UniProtKB-UniRule"/>
</dbReference>
<dbReference type="FunFam" id="1.20.120.420:FF:000001">
    <property type="entry name" value="Methylthioribose-1-phosphate isomerase"/>
    <property type="match status" value="1"/>
</dbReference>
<dbReference type="FunFam" id="3.40.50.10470:FF:000006">
    <property type="entry name" value="Methylthioribose-1-phosphate isomerase"/>
    <property type="match status" value="1"/>
</dbReference>
<dbReference type="Gene3D" id="1.20.120.420">
    <property type="entry name" value="translation initiation factor eif-2b, domain 1"/>
    <property type="match status" value="1"/>
</dbReference>
<dbReference type="Gene3D" id="3.40.50.10470">
    <property type="entry name" value="Translation initiation factor eif-2b, domain 2"/>
    <property type="match status" value="1"/>
</dbReference>
<dbReference type="HAMAP" id="MF_02229">
    <property type="entry name" value="Deoxyribose1P_isomerase"/>
    <property type="match status" value="1"/>
</dbReference>
<dbReference type="HAMAP" id="MF_01678">
    <property type="entry name" value="Salvage_MtnA"/>
    <property type="match status" value="1"/>
</dbReference>
<dbReference type="InterPro" id="IPR043679">
    <property type="entry name" value="Deoxyribose1P_isomerase_DrdI"/>
</dbReference>
<dbReference type="InterPro" id="IPR000649">
    <property type="entry name" value="IF-2B-related"/>
</dbReference>
<dbReference type="InterPro" id="IPR005251">
    <property type="entry name" value="IF-M1Pi"/>
</dbReference>
<dbReference type="InterPro" id="IPR042529">
    <property type="entry name" value="IF_2B-like_C"/>
</dbReference>
<dbReference type="InterPro" id="IPR011559">
    <property type="entry name" value="Initiation_fac_2B_a/b/d"/>
</dbReference>
<dbReference type="InterPro" id="IPR027363">
    <property type="entry name" value="M1Pi_N"/>
</dbReference>
<dbReference type="InterPro" id="IPR037171">
    <property type="entry name" value="NagB/RpiA_transferase-like"/>
</dbReference>
<dbReference type="NCBIfam" id="TIGR00524">
    <property type="entry name" value="eIF-2B_rel"/>
    <property type="match status" value="1"/>
</dbReference>
<dbReference type="NCBIfam" id="NF004326">
    <property type="entry name" value="PRK05720.1"/>
    <property type="match status" value="1"/>
</dbReference>
<dbReference type="NCBIfam" id="TIGR00512">
    <property type="entry name" value="salvage_mtnA"/>
    <property type="match status" value="1"/>
</dbReference>
<dbReference type="PANTHER" id="PTHR43475">
    <property type="entry name" value="METHYLTHIORIBOSE-1-PHOSPHATE ISOMERASE"/>
    <property type="match status" value="1"/>
</dbReference>
<dbReference type="PANTHER" id="PTHR43475:SF1">
    <property type="entry name" value="METHYLTHIORIBOSE-1-PHOSPHATE ISOMERASE"/>
    <property type="match status" value="1"/>
</dbReference>
<dbReference type="Pfam" id="PF01008">
    <property type="entry name" value="IF-2B"/>
    <property type="match status" value="1"/>
</dbReference>
<dbReference type="SUPFAM" id="SSF100950">
    <property type="entry name" value="NagB/RpiA/CoA transferase-like"/>
    <property type="match status" value="1"/>
</dbReference>
<comment type="function">
    <text evidence="1">Catalyzes the isomerization of 5-deoxy-alpha-D-ribose 1-phosphate to 5-deoxy-D-ribulose 1-phosphate, as part of a 5-deoxyribose salvage pathway that recycles this toxic radical SAM enzyme by-product to mainstream metabolites.</text>
</comment>
<comment type="catalytic activity">
    <reaction evidence="1">
        <text>5-deoxy-alpha-D-ribose 1-phosphate = 5-deoxy-D-ribulose 1-phosphate</text>
        <dbReference type="Rhea" id="RHEA:61296"/>
        <dbReference type="ChEBI" id="CHEBI:58749"/>
        <dbReference type="ChEBI" id="CHEBI:144504"/>
    </reaction>
    <physiologicalReaction direction="left-to-right" evidence="1">
        <dbReference type="Rhea" id="RHEA:61297"/>
    </physiologicalReaction>
</comment>
<comment type="pathway">
    <text evidence="1">Carbohydrate degradation.</text>
</comment>
<comment type="similarity">
    <text evidence="1">Belongs to the EIF-2B alpha/beta/delta subunits family. DrdI subfamily.</text>
</comment>
<comment type="sequence caution" evidence="2">
    <conflict type="erroneous initiation">
        <sequence resource="EMBL-CDS" id="AAP07419"/>
    </conflict>
</comment>
<feature type="chain" id="PRO_0000357144" description="5-deoxyribose 1-phosphate isomerase">
    <location>
        <begin position="1"/>
        <end position="347"/>
    </location>
</feature>
<feature type="active site" description="Proton donor" evidence="1">
    <location>
        <position position="239"/>
    </location>
</feature>
<feature type="binding site" evidence="1">
    <location>
        <begin position="48"/>
        <end position="50"/>
    </location>
    <ligand>
        <name>substrate</name>
    </ligand>
</feature>
<feature type="binding site" evidence="1">
    <location>
        <position position="91"/>
    </location>
    <ligand>
        <name>substrate</name>
    </ligand>
</feature>
<feature type="binding site" evidence="1">
    <location>
        <position position="198"/>
    </location>
    <ligand>
        <name>substrate</name>
    </ligand>
</feature>
<feature type="binding site" evidence="1">
    <location>
        <begin position="249"/>
        <end position="250"/>
    </location>
    <ligand>
        <name>substrate</name>
    </ligand>
</feature>
<feature type="site" description="Transition state stabilizer" evidence="1">
    <location>
        <position position="159"/>
    </location>
</feature>
<gene>
    <name evidence="1" type="primary">drdI</name>
    <name type="ordered locus">BC_0379</name>
</gene>
<accession>Q81IK7</accession>